<evidence type="ECO:0000255" key="1">
    <source>
        <dbReference type="HAMAP-Rule" id="MF_00360"/>
    </source>
</evidence>
<evidence type="ECO:0000256" key="2">
    <source>
        <dbReference type="SAM" id="MobiDB-lite"/>
    </source>
</evidence>
<evidence type="ECO:0000305" key="3"/>
<feature type="chain" id="PRO_0000176775" description="Small ribosomal subunit protein bS6">
    <location>
        <begin position="1"/>
        <end position="137"/>
    </location>
</feature>
<feature type="region of interest" description="Disordered" evidence="2">
    <location>
        <begin position="104"/>
        <end position="137"/>
    </location>
</feature>
<feature type="compositionally biased region" description="Basic and acidic residues" evidence="2">
    <location>
        <begin position="111"/>
        <end position="137"/>
    </location>
</feature>
<organism>
    <name type="scientific">Helicobacter hepaticus (strain ATCC 51449 / 3B1)</name>
    <dbReference type="NCBI Taxonomy" id="235279"/>
    <lineage>
        <taxon>Bacteria</taxon>
        <taxon>Pseudomonadati</taxon>
        <taxon>Campylobacterota</taxon>
        <taxon>Epsilonproteobacteria</taxon>
        <taxon>Campylobacterales</taxon>
        <taxon>Helicobacteraceae</taxon>
        <taxon>Helicobacter</taxon>
    </lineage>
</organism>
<sequence length="137" mass="16159">MKFYETMFILKPTLVEVEIKARLDFFKEVIIKNGGEIETCLDMGMRNLAYEIKKNKRGYYFVIYFKAQPSLILELERNYRINEEILRFIVIKYESKKEQSAWQSLVNKANNKPEPKPTKAKKEDVAPEAKEQAQTEA</sequence>
<protein>
    <recommendedName>
        <fullName evidence="1">Small ribosomal subunit protein bS6</fullName>
    </recommendedName>
    <alternativeName>
        <fullName evidence="3">30S ribosomal protein S6</fullName>
    </alternativeName>
</protein>
<accession>Q7VIR8</accession>
<keyword id="KW-1185">Reference proteome</keyword>
<keyword id="KW-0687">Ribonucleoprotein</keyword>
<keyword id="KW-0689">Ribosomal protein</keyword>
<keyword id="KW-0694">RNA-binding</keyword>
<keyword id="KW-0699">rRNA-binding</keyword>
<gene>
    <name evidence="1" type="primary">rpsF</name>
    <name type="ordered locus">HH_0536</name>
</gene>
<comment type="function">
    <text evidence="1">Binds together with bS18 to 16S ribosomal RNA.</text>
</comment>
<comment type="similarity">
    <text evidence="1">Belongs to the bacterial ribosomal protein bS6 family.</text>
</comment>
<name>RS6_HELHP</name>
<reference key="1">
    <citation type="journal article" date="2003" name="Proc. Natl. Acad. Sci. U.S.A.">
        <title>The complete genome sequence of the carcinogenic bacterium Helicobacter hepaticus.</title>
        <authorList>
            <person name="Suerbaum S."/>
            <person name="Josenhans C."/>
            <person name="Sterzenbach T."/>
            <person name="Drescher B."/>
            <person name="Brandt P."/>
            <person name="Bell M."/>
            <person name="Droege M."/>
            <person name="Fartmann B."/>
            <person name="Fischer H.-P."/>
            <person name="Ge Z."/>
            <person name="Hoerster A."/>
            <person name="Holland R."/>
            <person name="Klein K."/>
            <person name="Koenig J."/>
            <person name="Macko L."/>
            <person name="Mendz G.L."/>
            <person name="Nyakatura G."/>
            <person name="Schauer D.B."/>
            <person name="Shen Z."/>
            <person name="Weber J."/>
            <person name="Frosch M."/>
            <person name="Fox J.G."/>
        </authorList>
    </citation>
    <scope>NUCLEOTIDE SEQUENCE [LARGE SCALE GENOMIC DNA]</scope>
    <source>
        <strain>ATCC 51449 / 3B1</strain>
    </source>
</reference>
<proteinExistence type="inferred from homology"/>
<dbReference type="EMBL" id="AE017125">
    <property type="protein sequence ID" value="AAP77133.1"/>
    <property type="molecule type" value="Genomic_DNA"/>
</dbReference>
<dbReference type="RefSeq" id="WP_011115378.1">
    <property type="nucleotide sequence ID" value="NC_004917.1"/>
</dbReference>
<dbReference type="SMR" id="Q7VIR8"/>
<dbReference type="STRING" id="235279.HH_0536"/>
<dbReference type="KEGG" id="hhe:HH_0536"/>
<dbReference type="eggNOG" id="COG0360">
    <property type="taxonomic scope" value="Bacteria"/>
</dbReference>
<dbReference type="HOGENOM" id="CLU_113441_4_1_7"/>
<dbReference type="OrthoDB" id="9812702at2"/>
<dbReference type="Proteomes" id="UP000002495">
    <property type="component" value="Chromosome"/>
</dbReference>
<dbReference type="GO" id="GO:0022627">
    <property type="term" value="C:cytosolic small ribosomal subunit"/>
    <property type="evidence" value="ECO:0007669"/>
    <property type="project" value="TreeGrafter"/>
</dbReference>
<dbReference type="GO" id="GO:0070181">
    <property type="term" value="F:small ribosomal subunit rRNA binding"/>
    <property type="evidence" value="ECO:0007669"/>
    <property type="project" value="TreeGrafter"/>
</dbReference>
<dbReference type="GO" id="GO:0003735">
    <property type="term" value="F:structural constituent of ribosome"/>
    <property type="evidence" value="ECO:0007669"/>
    <property type="project" value="InterPro"/>
</dbReference>
<dbReference type="GO" id="GO:0006412">
    <property type="term" value="P:translation"/>
    <property type="evidence" value="ECO:0007669"/>
    <property type="project" value="UniProtKB-UniRule"/>
</dbReference>
<dbReference type="CDD" id="cd00473">
    <property type="entry name" value="bS6"/>
    <property type="match status" value="1"/>
</dbReference>
<dbReference type="Gene3D" id="3.30.70.60">
    <property type="match status" value="1"/>
</dbReference>
<dbReference type="HAMAP" id="MF_00360">
    <property type="entry name" value="Ribosomal_bS6"/>
    <property type="match status" value="1"/>
</dbReference>
<dbReference type="InterPro" id="IPR000529">
    <property type="entry name" value="Ribosomal_bS6"/>
</dbReference>
<dbReference type="InterPro" id="IPR020815">
    <property type="entry name" value="Ribosomal_bS6_CS"/>
</dbReference>
<dbReference type="InterPro" id="IPR035980">
    <property type="entry name" value="Ribosomal_bS6_sf"/>
</dbReference>
<dbReference type="InterPro" id="IPR020814">
    <property type="entry name" value="Ribosomal_S6_plastid/chlpt"/>
</dbReference>
<dbReference type="InterPro" id="IPR014717">
    <property type="entry name" value="Transl_elong_EF1B/ribsomal_bS6"/>
</dbReference>
<dbReference type="NCBIfam" id="TIGR00166">
    <property type="entry name" value="S6"/>
    <property type="match status" value="1"/>
</dbReference>
<dbReference type="PANTHER" id="PTHR21011">
    <property type="entry name" value="MITOCHONDRIAL 28S RIBOSOMAL PROTEIN S6"/>
    <property type="match status" value="1"/>
</dbReference>
<dbReference type="PANTHER" id="PTHR21011:SF1">
    <property type="entry name" value="SMALL RIBOSOMAL SUBUNIT PROTEIN BS6M"/>
    <property type="match status" value="1"/>
</dbReference>
<dbReference type="Pfam" id="PF01250">
    <property type="entry name" value="Ribosomal_S6"/>
    <property type="match status" value="1"/>
</dbReference>
<dbReference type="SUPFAM" id="SSF54995">
    <property type="entry name" value="Ribosomal protein S6"/>
    <property type="match status" value="1"/>
</dbReference>
<dbReference type="PROSITE" id="PS01048">
    <property type="entry name" value="RIBOSOMAL_S6"/>
    <property type="match status" value="1"/>
</dbReference>